<keyword id="KW-0028">Amino-acid biosynthesis</keyword>
<keyword id="KW-0055">Arginine biosynthesis</keyword>
<keyword id="KW-0963">Cytoplasm</keyword>
<keyword id="KW-1185">Reference proteome</keyword>
<keyword id="KW-0808">Transferase</keyword>
<proteinExistence type="inferred from homology"/>
<sequence>MSTFYQKPFLKLLDFTASELTALLQLAAKLKADKKNGKEEQKLVGKNIALIFEKDSTRTRCSFEVAAYDQGARVTYLGSSGSQIGHKESIKDTARVLGRMFDGIQYRGYGQEIVETLAEYSGVPVWNGLTDEYHPTQLLADLLTMQEHLPGKAFNEMTLVYAGDARNNMGNSMLEAAALTGLDLRLVAPKACWPQAALVAECSAMAKKNGGAITLTEDIASGVKGADFIYTDVWVSMGEPKEKWAERIALLRDYQVNSQMMALTGNPQVKFLHCLPAFHDDETTLGKKMAEEYGLHGGMEVTDEVFESAASIVFDEAENRMHTIKAVMVATLSK</sequence>
<feature type="initiator methionine" description="Removed" evidence="1">
    <location>
        <position position="1"/>
    </location>
</feature>
<feature type="chain" id="PRO_0000113004" description="Ornithine carbamoyltransferase">
    <location>
        <begin position="2"/>
        <end position="334"/>
    </location>
</feature>
<feature type="binding site" evidence="2">
    <location>
        <begin position="56"/>
        <end position="59"/>
    </location>
    <ligand>
        <name>carbamoyl phosphate</name>
        <dbReference type="ChEBI" id="CHEBI:58228"/>
    </ligand>
</feature>
<feature type="binding site" evidence="2">
    <location>
        <position position="83"/>
    </location>
    <ligand>
        <name>carbamoyl phosphate</name>
        <dbReference type="ChEBI" id="CHEBI:58228"/>
    </ligand>
</feature>
<feature type="binding site" evidence="2">
    <location>
        <position position="107"/>
    </location>
    <ligand>
        <name>carbamoyl phosphate</name>
        <dbReference type="ChEBI" id="CHEBI:58228"/>
    </ligand>
</feature>
<feature type="binding site" evidence="2">
    <location>
        <begin position="134"/>
        <end position="137"/>
    </location>
    <ligand>
        <name>carbamoyl phosphate</name>
        <dbReference type="ChEBI" id="CHEBI:58228"/>
    </ligand>
</feature>
<feature type="binding site" evidence="2">
    <location>
        <position position="168"/>
    </location>
    <ligand>
        <name>L-ornithine</name>
        <dbReference type="ChEBI" id="CHEBI:46911"/>
    </ligand>
</feature>
<feature type="binding site" evidence="2">
    <location>
        <position position="232"/>
    </location>
    <ligand>
        <name>L-ornithine</name>
        <dbReference type="ChEBI" id="CHEBI:46911"/>
    </ligand>
</feature>
<feature type="binding site" evidence="2">
    <location>
        <begin position="236"/>
        <end position="237"/>
    </location>
    <ligand>
        <name>L-ornithine</name>
        <dbReference type="ChEBI" id="CHEBI:46911"/>
    </ligand>
</feature>
<feature type="binding site" evidence="2">
    <location>
        <begin position="274"/>
        <end position="275"/>
    </location>
    <ligand>
        <name>carbamoyl phosphate</name>
        <dbReference type="ChEBI" id="CHEBI:58228"/>
    </ligand>
</feature>
<feature type="binding site" evidence="2">
    <location>
        <position position="320"/>
    </location>
    <ligand>
        <name>carbamoyl phosphate</name>
        <dbReference type="ChEBI" id="CHEBI:58228"/>
    </ligand>
</feature>
<reference key="1">
    <citation type="journal article" date="2001" name="Nature">
        <title>Complete genome sequence of Salmonella enterica serovar Typhimurium LT2.</title>
        <authorList>
            <person name="McClelland M."/>
            <person name="Sanderson K.E."/>
            <person name="Spieth J."/>
            <person name="Clifton S.W."/>
            <person name="Latreille P."/>
            <person name="Courtney L."/>
            <person name="Porwollik S."/>
            <person name="Ali J."/>
            <person name="Dante M."/>
            <person name="Du F."/>
            <person name="Hou S."/>
            <person name="Layman D."/>
            <person name="Leonard S."/>
            <person name="Nguyen C."/>
            <person name="Scott K."/>
            <person name="Holmes A."/>
            <person name="Grewal N."/>
            <person name="Mulvaney E."/>
            <person name="Ryan E."/>
            <person name="Sun H."/>
            <person name="Florea L."/>
            <person name="Miller W."/>
            <person name="Stoneking T."/>
            <person name="Nhan M."/>
            <person name="Waterston R."/>
            <person name="Wilson R.K."/>
        </authorList>
    </citation>
    <scope>NUCLEOTIDE SEQUENCE [LARGE SCALE GENOMIC DNA]</scope>
    <source>
        <strain>LT2 / SGSC1412 / ATCC 700720</strain>
    </source>
</reference>
<reference key="2">
    <citation type="journal article" date="1993" name="J. Bacteriol.">
        <title>Isolation of the gene (miaE) encoding the hydroxylase involved in the synthesis of 2-methylthio-cis-ribozeatin in tRNA of Salmonella typhimurium and characterization of mutants.</title>
        <authorList>
            <person name="Persson B.C."/>
            <person name="Bjoerk G.R."/>
        </authorList>
    </citation>
    <scope>NUCLEOTIDE SEQUENCE [GENOMIC DNA] OF 1-218</scope>
    <source>
        <strain>LT2</strain>
    </source>
</reference>
<comment type="function">
    <text evidence="1">Reversibly catalyzes the transfer of the carbamoyl group from carbamoyl phosphate (CP) to the N(epsilon) atom of ornithine (ORN) to produce L-citrulline.</text>
</comment>
<comment type="catalytic activity">
    <reaction>
        <text>carbamoyl phosphate + L-ornithine = L-citrulline + phosphate + H(+)</text>
        <dbReference type="Rhea" id="RHEA:19513"/>
        <dbReference type="ChEBI" id="CHEBI:15378"/>
        <dbReference type="ChEBI" id="CHEBI:43474"/>
        <dbReference type="ChEBI" id="CHEBI:46911"/>
        <dbReference type="ChEBI" id="CHEBI:57743"/>
        <dbReference type="ChEBI" id="CHEBI:58228"/>
        <dbReference type="EC" id="2.1.3.3"/>
    </reaction>
</comment>
<comment type="pathway">
    <text>Amino-acid biosynthesis; L-arginine biosynthesis; L-arginine from L-ornithine and carbamoyl phosphate: step 1/3.</text>
</comment>
<comment type="subunit">
    <text evidence="1">Homotrimer.</text>
</comment>
<comment type="subcellular location">
    <subcellularLocation>
        <location evidence="1">Cytoplasm</location>
    </subcellularLocation>
</comment>
<comment type="similarity">
    <text evidence="3">Belongs to the aspartate/ornithine carbamoyltransferase superfamily. OTCase family.</text>
</comment>
<dbReference type="EC" id="2.1.3.3"/>
<dbReference type="EMBL" id="AE006468">
    <property type="protein sequence ID" value="AAL23288.1"/>
    <property type="molecule type" value="Genomic_DNA"/>
</dbReference>
<dbReference type="EMBL" id="X73368">
    <property type="protein sequence ID" value="CAA51780.1"/>
    <property type="molecule type" value="Genomic_DNA"/>
</dbReference>
<dbReference type="PIR" id="S34359">
    <property type="entry name" value="S34359"/>
</dbReference>
<dbReference type="RefSeq" id="NP_463329.1">
    <property type="nucleotide sequence ID" value="NC_003197.2"/>
</dbReference>
<dbReference type="SMR" id="Q08016"/>
<dbReference type="STRING" id="99287.STM4469"/>
<dbReference type="PaxDb" id="99287-STM4469"/>
<dbReference type="GeneID" id="1255995"/>
<dbReference type="KEGG" id="stm:STM4469"/>
<dbReference type="PATRIC" id="fig|99287.12.peg.4704"/>
<dbReference type="HOGENOM" id="CLU_043846_3_1_6"/>
<dbReference type="OMA" id="VATDVWV"/>
<dbReference type="PhylomeDB" id="Q08016"/>
<dbReference type="BioCyc" id="SENT99287:STM4469-MONOMER"/>
<dbReference type="SABIO-RK" id="Q08016"/>
<dbReference type="UniPathway" id="UPA00068">
    <property type="reaction ID" value="UER00112"/>
</dbReference>
<dbReference type="Proteomes" id="UP000001014">
    <property type="component" value="Chromosome"/>
</dbReference>
<dbReference type="GO" id="GO:0005737">
    <property type="term" value="C:cytoplasm"/>
    <property type="evidence" value="ECO:0007669"/>
    <property type="project" value="UniProtKB-SubCell"/>
</dbReference>
<dbReference type="GO" id="GO:0016597">
    <property type="term" value="F:amino acid binding"/>
    <property type="evidence" value="ECO:0007669"/>
    <property type="project" value="InterPro"/>
</dbReference>
<dbReference type="GO" id="GO:0004585">
    <property type="term" value="F:ornithine carbamoyltransferase activity"/>
    <property type="evidence" value="ECO:0000318"/>
    <property type="project" value="GO_Central"/>
</dbReference>
<dbReference type="GO" id="GO:0042450">
    <property type="term" value="P:arginine biosynthetic process via ornithine"/>
    <property type="evidence" value="ECO:0000318"/>
    <property type="project" value="GO_Central"/>
</dbReference>
<dbReference type="GO" id="GO:0019240">
    <property type="term" value="P:citrulline biosynthetic process"/>
    <property type="evidence" value="ECO:0000318"/>
    <property type="project" value="GO_Central"/>
</dbReference>
<dbReference type="GO" id="GO:0006526">
    <property type="term" value="P:L-arginine biosynthetic process"/>
    <property type="evidence" value="ECO:0007669"/>
    <property type="project" value="UniProtKB-UniRule"/>
</dbReference>
<dbReference type="FunFam" id="3.40.50.1370:FF:000004">
    <property type="entry name" value="Ornithine carbamoyltransferase"/>
    <property type="match status" value="1"/>
</dbReference>
<dbReference type="Gene3D" id="3.40.50.1370">
    <property type="entry name" value="Aspartate/ornithine carbamoyltransferase"/>
    <property type="match status" value="2"/>
</dbReference>
<dbReference type="HAMAP" id="MF_01109">
    <property type="entry name" value="OTCase"/>
    <property type="match status" value="1"/>
</dbReference>
<dbReference type="InterPro" id="IPR006132">
    <property type="entry name" value="Asp/Orn_carbamoyltranf_P-bd"/>
</dbReference>
<dbReference type="InterPro" id="IPR006130">
    <property type="entry name" value="Asp/Orn_carbamoylTrfase"/>
</dbReference>
<dbReference type="InterPro" id="IPR036901">
    <property type="entry name" value="Asp/Orn_carbamoylTrfase_sf"/>
</dbReference>
<dbReference type="InterPro" id="IPR006131">
    <property type="entry name" value="Asp_carbamoyltransf_Asp/Orn-bd"/>
</dbReference>
<dbReference type="InterPro" id="IPR002292">
    <property type="entry name" value="Orn/put_carbamltrans"/>
</dbReference>
<dbReference type="InterPro" id="IPR024904">
    <property type="entry name" value="OTCase_ArgI"/>
</dbReference>
<dbReference type="NCBIfam" id="TIGR00658">
    <property type="entry name" value="orni_carb_tr"/>
    <property type="match status" value="1"/>
</dbReference>
<dbReference type="NCBIfam" id="NF003286">
    <property type="entry name" value="PRK04284.1"/>
    <property type="match status" value="1"/>
</dbReference>
<dbReference type="NCBIfam" id="NF009213">
    <property type="entry name" value="PRK12562.1"/>
    <property type="match status" value="1"/>
</dbReference>
<dbReference type="PANTHER" id="PTHR45753:SF4">
    <property type="entry name" value="ORNITHINE CARBAMOYLTRANSFERASE SUBUNIT F-RELATED"/>
    <property type="match status" value="1"/>
</dbReference>
<dbReference type="PANTHER" id="PTHR45753">
    <property type="entry name" value="ORNITHINE CARBAMOYLTRANSFERASE, MITOCHONDRIAL"/>
    <property type="match status" value="1"/>
</dbReference>
<dbReference type="Pfam" id="PF00185">
    <property type="entry name" value="OTCace"/>
    <property type="match status" value="1"/>
</dbReference>
<dbReference type="Pfam" id="PF02729">
    <property type="entry name" value="OTCace_N"/>
    <property type="match status" value="1"/>
</dbReference>
<dbReference type="PRINTS" id="PR00100">
    <property type="entry name" value="AOTCASE"/>
</dbReference>
<dbReference type="PRINTS" id="PR00102">
    <property type="entry name" value="OTCASE"/>
</dbReference>
<dbReference type="SUPFAM" id="SSF53671">
    <property type="entry name" value="Aspartate/ornithine carbamoyltransferase"/>
    <property type="match status" value="1"/>
</dbReference>
<dbReference type="PROSITE" id="PS00097">
    <property type="entry name" value="CARBAMOYLTRANSFERASE"/>
    <property type="match status" value="1"/>
</dbReference>
<name>OTC_SALTY</name>
<gene>
    <name type="primary">argI</name>
    <name type="ordered locus">STM4469</name>
</gene>
<evidence type="ECO:0000250" key="1"/>
<evidence type="ECO:0000255" key="2">
    <source>
        <dbReference type="HAMAP-Rule" id="MF_01109"/>
    </source>
</evidence>
<evidence type="ECO:0000305" key="3"/>
<protein>
    <recommendedName>
        <fullName>Ornithine carbamoyltransferase</fullName>
        <shortName>OTCase</shortName>
        <ecNumber>2.1.3.3</ecNumber>
    </recommendedName>
</protein>
<organism>
    <name type="scientific">Salmonella typhimurium (strain LT2 / SGSC1412 / ATCC 700720)</name>
    <dbReference type="NCBI Taxonomy" id="99287"/>
    <lineage>
        <taxon>Bacteria</taxon>
        <taxon>Pseudomonadati</taxon>
        <taxon>Pseudomonadota</taxon>
        <taxon>Gammaproteobacteria</taxon>
        <taxon>Enterobacterales</taxon>
        <taxon>Enterobacteriaceae</taxon>
        <taxon>Salmonella</taxon>
    </lineage>
</organism>
<accession>Q08016</accession>